<comment type="catalytic activity">
    <reaction>
        <text>D-altronate + NAD(+) = keto-D-tagaturonate + NADH + H(+)</text>
        <dbReference type="Rhea" id="RHEA:17813"/>
        <dbReference type="ChEBI" id="CHEBI:15378"/>
        <dbReference type="ChEBI" id="CHEBI:17360"/>
        <dbReference type="ChEBI" id="CHEBI:17886"/>
        <dbReference type="ChEBI" id="CHEBI:57540"/>
        <dbReference type="ChEBI" id="CHEBI:57945"/>
        <dbReference type="EC" id="1.1.1.58"/>
    </reaction>
</comment>
<comment type="pathway">
    <text>Carbohydrate metabolism; pentose and glucuronate interconversion.</text>
</comment>
<comment type="similarity">
    <text evidence="2">Belongs to the mannitol dehydrogenase family. UxaB subfamily.</text>
</comment>
<evidence type="ECO:0000250" key="1"/>
<evidence type="ECO:0000305" key="2"/>
<dbReference type="EC" id="1.1.1.58"/>
<dbReference type="EMBL" id="AE005674">
    <property type="protein sequence ID" value="AAN43160.1"/>
    <property type="molecule type" value="Genomic_DNA"/>
</dbReference>
<dbReference type="EMBL" id="AE014073">
    <property type="protein sequence ID" value="AAP17054.1"/>
    <property type="molecule type" value="Genomic_DNA"/>
</dbReference>
<dbReference type="RefSeq" id="NP_707453.1">
    <property type="nucleotide sequence ID" value="NC_004337.2"/>
</dbReference>
<dbReference type="RefSeq" id="WP_000854618.1">
    <property type="nucleotide sequence ID" value="NZ_CP123365.1"/>
</dbReference>
<dbReference type="SMR" id="Q83RE1"/>
<dbReference type="STRING" id="198214.SF1572"/>
<dbReference type="PaxDb" id="198214-SF1572"/>
<dbReference type="GeneID" id="1024755"/>
<dbReference type="KEGG" id="sfl:SF1572"/>
<dbReference type="KEGG" id="sfx:S1699"/>
<dbReference type="PATRIC" id="fig|198214.7.peg.1858"/>
<dbReference type="HOGENOM" id="CLU_027324_1_0_6"/>
<dbReference type="UniPathway" id="UPA00246"/>
<dbReference type="Proteomes" id="UP000001006">
    <property type="component" value="Chromosome"/>
</dbReference>
<dbReference type="Proteomes" id="UP000002673">
    <property type="component" value="Chromosome"/>
</dbReference>
<dbReference type="GO" id="GO:0005829">
    <property type="term" value="C:cytosol"/>
    <property type="evidence" value="ECO:0007669"/>
    <property type="project" value="TreeGrafter"/>
</dbReference>
<dbReference type="GO" id="GO:0008926">
    <property type="term" value="F:mannitol-1-phosphate 5-dehydrogenase activity"/>
    <property type="evidence" value="ECO:0007669"/>
    <property type="project" value="TreeGrafter"/>
</dbReference>
<dbReference type="GO" id="GO:0009026">
    <property type="term" value="F:tagaturonate reductase activity"/>
    <property type="evidence" value="ECO:0007669"/>
    <property type="project" value="UniProtKB-UniRule"/>
</dbReference>
<dbReference type="GO" id="GO:0019698">
    <property type="term" value="P:D-galacturonate catabolic process"/>
    <property type="evidence" value="ECO:0007669"/>
    <property type="project" value="TreeGrafter"/>
</dbReference>
<dbReference type="GO" id="GO:0019592">
    <property type="term" value="P:mannitol catabolic process"/>
    <property type="evidence" value="ECO:0007669"/>
    <property type="project" value="TreeGrafter"/>
</dbReference>
<dbReference type="FunFam" id="1.10.1040.10:FF:000018">
    <property type="entry name" value="Altronate oxidoreductase"/>
    <property type="match status" value="1"/>
</dbReference>
<dbReference type="FunFam" id="3.40.50.720:FF:000153">
    <property type="entry name" value="Altronate oxidoreductase"/>
    <property type="match status" value="1"/>
</dbReference>
<dbReference type="Gene3D" id="1.10.1040.10">
    <property type="entry name" value="N-(1-d-carboxylethyl)-l-norvaline Dehydrogenase, domain 2"/>
    <property type="match status" value="1"/>
</dbReference>
<dbReference type="Gene3D" id="3.40.50.720">
    <property type="entry name" value="NAD(P)-binding Rossmann-like Domain"/>
    <property type="match status" value="1"/>
</dbReference>
<dbReference type="HAMAP" id="MF_00670">
    <property type="entry name" value="Altron_oxidoreduct"/>
    <property type="match status" value="1"/>
</dbReference>
<dbReference type="InterPro" id="IPR008927">
    <property type="entry name" value="6-PGluconate_DH-like_C_sf"/>
</dbReference>
<dbReference type="InterPro" id="IPR013328">
    <property type="entry name" value="6PGD_dom2"/>
</dbReference>
<dbReference type="InterPro" id="IPR023668">
    <property type="entry name" value="Altronate_OxRdtase"/>
</dbReference>
<dbReference type="InterPro" id="IPR013118">
    <property type="entry name" value="Mannitol_DH_C"/>
</dbReference>
<dbReference type="InterPro" id="IPR013131">
    <property type="entry name" value="Mannitol_DH_N"/>
</dbReference>
<dbReference type="InterPro" id="IPR036291">
    <property type="entry name" value="NAD(P)-bd_dom_sf"/>
</dbReference>
<dbReference type="NCBIfam" id="NF002969">
    <property type="entry name" value="PRK03643.1"/>
    <property type="match status" value="1"/>
</dbReference>
<dbReference type="PANTHER" id="PTHR30524:SF0">
    <property type="entry name" value="ALTRONATE OXIDOREDUCTASE-RELATED"/>
    <property type="match status" value="1"/>
</dbReference>
<dbReference type="PANTHER" id="PTHR30524">
    <property type="entry name" value="MANNITOL-1-PHOSPHATE 5-DEHYDROGENASE"/>
    <property type="match status" value="1"/>
</dbReference>
<dbReference type="Pfam" id="PF01232">
    <property type="entry name" value="Mannitol_dh"/>
    <property type="match status" value="1"/>
</dbReference>
<dbReference type="Pfam" id="PF08125">
    <property type="entry name" value="Mannitol_dh_C"/>
    <property type="match status" value="1"/>
</dbReference>
<dbReference type="SUPFAM" id="SSF48179">
    <property type="entry name" value="6-phosphogluconate dehydrogenase C-terminal domain-like"/>
    <property type="match status" value="1"/>
</dbReference>
<dbReference type="SUPFAM" id="SSF51735">
    <property type="entry name" value="NAD(P)-binding Rossmann-fold domains"/>
    <property type="match status" value="1"/>
</dbReference>
<proteinExistence type="inferred from homology"/>
<accession>Q83RE1</accession>
<organism>
    <name type="scientific">Shigella flexneri</name>
    <dbReference type="NCBI Taxonomy" id="623"/>
    <lineage>
        <taxon>Bacteria</taxon>
        <taxon>Pseudomonadati</taxon>
        <taxon>Pseudomonadota</taxon>
        <taxon>Gammaproteobacteria</taxon>
        <taxon>Enterobacterales</taxon>
        <taxon>Enterobacteriaceae</taxon>
        <taxon>Shigella</taxon>
    </lineage>
</organism>
<name>UXAB_SHIFL</name>
<keyword id="KW-0520">NAD</keyword>
<keyword id="KW-0560">Oxidoreductase</keyword>
<keyword id="KW-1185">Reference proteome</keyword>
<reference key="1">
    <citation type="journal article" date="2002" name="Nucleic Acids Res.">
        <title>Genome sequence of Shigella flexneri 2a: insights into pathogenicity through comparison with genomes of Escherichia coli K12 and O157.</title>
        <authorList>
            <person name="Jin Q."/>
            <person name="Yuan Z."/>
            <person name="Xu J."/>
            <person name="Wang Y."/>
            <person name="Shen Y."/>
            <person name="Lu W."/>
            <person name="Wang J."/>
            <person name="Liu H."/>
            <person name="Yang J."/>
            <person name="Yang F."/>
            <person name="Zhang X."/>
            <person name="Zhang J."/>
            <person name="Yang G."/>
            <person name="Wu H."/>
            <person name="Qu D."/>
            <person name="Dong J."/>
            <person name="Sun L."/>
            <person name="Xue Y."/>
            <person name="Zhao A."/>
            <person name="Gao Y."/>
            <person name="Zhu J."/>
            <person name="Kan B."/>
            <person name="Ding K."/>
            <person name="Chen S."/>
            <person name="Cheng H."/>
            <person name="Yao Z."/>
            <person name="He B."/>
            <person name="Chen R."/>
            <person name="Ma D."/>
            <person name="Qiang B."/>
            <person name="Wen Y."/>
            <person name="Hou Y."/>
            <person name="Yu J."/>
        </authorList>
    </citation>
    <scope>NUCLEOTIDE SEQUENCE [LARGE SCALE GENOMIC DNA]</scope>
    <source>
        <strain>301 / Serotype 2a</strain>
    </source>
</reference>
<reference key="2">
    <citation type="journal article" date="2003" name="Infect. Immun.">
        <title>Complete genome sequence and comparative genomics of Shigella flexneri serotype 2a strain 2457T.</title>
        <authorList>
            <person name="Wei J."/>
            <person name="Goldberg M.B."/>
            <person name="Burland V."/>
            <person name="Venkatesan M.M."/>
            <person name="Deng W."/>
            <person name="Fournier G."/>
            <person name="Mayhew G.F."/>
            <person name="Plunkett G. III"/>
            <person name="Rose D.J."/>
            <person name="Darling A."/>
            <person name="Mau B."/>
            <person name="Perna N.T."/>
            <person name="Payne S.M."/>
            <person name="Runyen-Janecky L.J."/>
            <person name="Zhou S."/>
            <person name="Schwartz D.C."/>
            <person name="Blattner F.R."/>
        </authorList>
    </citation>
    <scope>NUCLEOTIDE SEQUENCE [LARGE SCALE GENOMIC DNA]</scope>
    <source>
        <strain>ATCC 700930 / 2457T / Serotype 2a</strain>
    </source>
</reference>
<sequence length="483" mass="54866">MKTLNRRDFPGAQYPERIIQFGEGNFLRAFVDWQIDLLNEHTDLNSGVVVVRPIETSFPPSLSTQDGLYTTIIRGLNEKGEAVSDARLIRSVNREISVYSEYDEFLKLAHNPEMRFVFSNTTEAGISYHAGDKFDDAPAVSYPAKLTRLLFERFSHFNGALDKGWIIIPCELIDYNGDALRELVLRYAQEWALPEAFIQWLDQANSFCSTLVDRIVTGYPRDEVAKLEEELGYHDDFLDTAEHFYLFVIQGPKSLATELRLDKYPLNVLIVDDIKPYKERKVAILNGAHTALVPVAFQAGLDTVGEAMNDAEICAFVEKAIYEEIIPVLDLPRDELESFASAVTGRFRNPYIKHQLLSIALNGMTKFRTRILPQLLAGQKANGTLPARLTFALAALIAFYRGERNGETYPVQDDAHWLERYQQLWSQHRDRVIGTQELVAIVLAEKDHWEQDLTQVPGLVEQVANDLDAILEKGMREAVRPLC</sequence>
<gene>
    <name type="primary">uxaB</name>
    <name type="ordered locus">SF1572</name>
    <name type="ordered locus">S1699</name>
</gene>
<protein>
    <recommendedName>
        <fullName>Altronate oxidoreductase</fullName>
        <ecNumber>1.1.1.58</ecNumber>
    </recommendedName>
    <alternativeName>
        <fullName>Tagaturonate dehydrogenase</fullName>
    </alternativeName>
    <alternativeName>
        <fullName>Tagaturonate reductase</fullName>
    </alternativeName>
</protein>
<feature type="chain" id="PRO_0000170745" description="Altronate oxidoreductase">
    <location>
        <begin position="1"/>
        <end position="483"/>
    </location>
</feature>
<feature type="binding site" evidence="1">
    <location>
        <begin position="18"/>
        <end position="29"/>
    </location>
    <ligand>
        <name>NAD(+)</name>
        <dbReference type="ChEBI" id="CHEBI:57540"/>
    </ligand>
</feature>
<feature type="sequence conflict" description="In Ref. 2; AAP17054." evidence="2" ref="2">
    <original>D</original>
    <variation>G</variation>
    <location>
        <position position="236"/>
    </location>
</feature>